<name>Y664_HELPY</name>
<reference key="1">
    <citation type="journal article" date="1997" name="Nature">
        <title>The complete genome sequence of the gastric pathogen Helicobacter pylori.</title>
        <authorList>
            <person name="Tomb J.-F."/>
            <person name="White O."/>
            <person name="Kerlavage A.R."/>
            <person name="Clayton R.A."/>
            <person name="Sutton G.G."/>
            <person name="Fleischmann R.D."/>
            <person name="Ketchum K.A."/>
            <person name="Klenk H.-P."/>
            <person name="Gill S.R."/>
            <person name="Dougherty B.A."/>
            <person name="Nelson K.E."/>
            <person name="Quackenbush J."/>
            <person name="Zhou L."/>
            <person name="Kirkness E.F."/>
            <person name="Peterson S.N."/>
            <person name="Loftus B.J."/>
            <person name="Richardson D.L."/>
            <person name="Dodson R.J."/>
            <person name="Khalak H.G."/>
            <person name="Glodek A."/>
            <person name="McKenney K."/>
            <person name="FitzGerald L.M."/>
            <person name="Lee N."/>
            <person name="Adams M.D."/>
            <person name="Hickey E.K."/>
            <person name="Berg D.E."/>
            <person name="Gocayne J.D."/>
            <person name="Utterback T.R."/>
            <person name="Peterson J.D."/>
            <person name="Kelley J.M."/>
            <person name="Cotton M.D."/>
            <person name="Weidman J.F."/>
            <person name="Fujii C."/>
            <person name="Bowman C."/>
            <person name="Watthey L."/>
            <person name="Wallin E."/>
            <person name="Hayes W.S."/>
            <person name="Borodovsky M."/>
            <person name="Karp P.D."/>
            <person name="Smith H.O."/>
            <person name="Fraser C.M."/>
            <person name="Venter J.C."/>
        </authorList>
    </citation>
    <scope>NUCLEOTIDE SEQUENCE [LARGE SCALE GENOMIC DNA]</scope>
    <source>
        <strain>ATCC 700392 / 26695</strain>
    </source>
</reference>
<organism>
    <name type="scientific">Helicobacter pylori (strain ATCC 700392 / 26695)</name>
    <name type="common">Campylobacter pylori</name>
    <dbReference type="NCBI Taxonomy" id="85962"/>
    <lineage>
        <taxon>Bacteria</taxon>
        <taxon>Pseudomonadati</taxon>
        <taxon>Campylobacterota</taxon>
        <taxon>Epsilonproteobacteria</taxon>
        <taxon>Campylobacterales</taxon>
        <taxon>Helicobacteraceae</taxon>
        <taxon>Helicobacter</taxon>
    </lineage>
</organism>
<gene>
    <name type="ordered locus">HP_0664</name>
</gene>
<dbReference type="EMBL" id="AE000511">
    <property type="protein sequence ID" value="AAD07731.1"/>
    <property type="molecule type" value="Genomic_DNA"/>
</dbReference>
<dbReference type="PIR" id="H64602">
    <property type="entry name" value="H64602"/>
</dbReference>
<dbReference type="RefSeq" id="NP_207458.1">
    <property type="nucleotide sequence ID" value="NC_000915.1"/>
</dbReference>
<dbReference type="RefSeq" id="WP_000413462.1">
    <property type="nucleotide sequence ID" value="NC_018939.1"/>
</dbReference>
<dbReference type="STRING" id="85962.HP_0664"/>
<dbReference type="PaxDb" id="85962-C694_03435"/>
<dbReference type="EnsemblBacteria" id="AAD07731">
    <property type="protein sequence ID" value="AAD07731"/>
    <property type="gene ID" value="HP_0664"/>
</dbReference>
<dbReference type="KEGG" id="heo:C694_03435"/>
<dbReference type="KEGG" id="hpy:HP_0664"/>
<dbReference type="PATRIC" id="fig|85962.47.peg.714"/>
<dbReference type="eggNOG" id="ENOG5030YCA">
    <property type="taxonomic scope" value="Bacteria"/>
</dbReference>
<dbReference type="InParanoid" id="P64663"/>
<dbReference type="OrthoDB" id="5324700at2"/>
<dbReference type="Proteomes" id="UP000000429">
    <property type="component" value="Chromosome"/>
</dbReference>
<dbReference type="HAMAP" id="MF_02110">
    <property type="entry name" value="UPF0763"/>
    <property type="match status" value="1"/>
</dbReference>
<dbReference type="InterPro" id="IPR019724">
    <property type="entry name" value="UPF0763"/>
</dbReference>
<dbReference type="Pfam" id="PF10788">
    <property type="entry name" value="DUF2603"/>
    <property type="match status" value="1"/>
</dbReference>
<comment type="similarity">
    <text evidence="1">Belongs to the UPF0763 family.</text>
</comment>
<feature type="chain" id="PRO_0000128694" description="UPF0763 protein HP_0664">
    <location>
        <begin position="1"/>
        <end position="171"/>
    </location>
</feature>
<accession>P64663</accession>
<accession>O25375</accession>
<protein>
    <recommendedName>
        <fullName evidence="1">UPF0763 protein HP_0664</fullName>
    </recommendedName>
</protein>
<sequence>MEKLPKKRVSKTKSQKLIHSLTTQKNRAFLKKISANEMLLELEKGAFKKNEAYFISDEEDKNYVLVPDNVISLLAENARKAFEARLRAELERDIITQAPIDFEDVREVSLQLLENLRQKDGNLPNINTLNFVKQIKKEHPNLFFNFDNMFKQPPFNENNFENFDNSDEENF</sequence>
<evidence type="ECO:0000255" key="1">
    <source>
        <dbReference type="HAMAP-Rule" id="MF_02110"/>
    </source>
</evidence>
<keyword id="KW-1185">Reference proteome</keyword>
<proteinExistence type="inferred from homology"/>